<evidence type="ECO:0000256" key="1">
    <source>
        <dbReference type="SAM" id="MobiDB-lite"/>
    </source>
</evidence>
<evidence type="ECO:0000269" key="2">
    <source>
    </source>
</evidence>
<evidence type="ECO:0000269" key="3">
    <source>
    </source>
</evidence>
<evidence type="ECO:0000305" key="4"/>
<gene>
    <name type="primary">nup124</name>
    <name type="ORF">SPAC30D11.04c</name>
</gene>
<comment type="function">
    <text evidence="2">Nucleoporins may be involved in both binding and translocation of the proteins during nucleocytoplasmic transport. In S.pombe it is required for the nuclear localization of retrotransposon tf1.</text>
</comment>
<comment type="subcellular location">
    <subcellularLocation>
        <location evidence="2">Nucleus</location>
        <location evidence="2">Nuclear pore complex</location>
    </subcellularLocation>
</comment>
<comment type="domain">
    <text>Contains F-X-F-G repeats.</text>
</comment>
<comment type="similarity">
    <text evidence="4">To yeast nucleoporins NUP1 and NUP2.</text>
</comment>
<protein>
    <recommendedName>
        <fullName>Nucleoporin nup124</fullName>
    </recommendedName>
    <alternativeName>
        <fullName>Nuclear pore protein nup124</fullName>
    </alternativeName>
</protein>
<keyword id="KW-0509">mRNA transport</keyword>
<keyword id="KW-0906">Nuclear pore complex</keyword>
<keyword id="KW-0539">Nucleus</keyword>
<keyword id="KW-0597">Phosphoprotein</keyword>
<keyword id="KW-0653">Protein transport</keyword>
<keyword id="KW-1185">Reference proteome</keyword>
<keyword id="KW-0677">Repeat</keyword>
<keyword id="KW-0811">Translocation</keyword>
<keyword id="KW-0813">Transport</keyword>
<organism>
    <name type="scientific">Schizosaccharomyces pombe (strain 972 / ATCC 24843)</name>
    <name type="common">Fission yeast</name>
    <dbReference type="NCBI Taxonomy" id="284812"/>
    <lineage>
        <taxon>Eukaryota</taxon>
        <taxon>Fungi</taxon>
        <taxon>Dikarya</taxon>
        <taxon>Ascomycota</taxon>
        <taxon>Taphrinomycotina</taxon>
        <taxon>Schizosaccharomycetes</taxon>
        <taxon>Schizosaccharomycetales</taxon>
        <taxon>Schizosaccharomycetaceae</taxon>
        <taxon>Schizosaccharomyces</taxon>
    </lineage>
</organism>
<sequence length="1159" mass="123974">MPPVSKNTRTSSKTVKKPYDPPQGSSRPFFTVLKRAFSSVLHPFTSGLDEKASGTASKDRKSGRAGTKSLLTPELTPHYLGKSPRIIRVSNRSHVRTIDGIEEKVHTNTFEPRKPKQKQDYTNSPTLFKRHDELSLKSLNSLHPSSALSKKLGSTSQHQIATPKSSASLLNILRSLHDEQKNTLNISSVKQDRITEANPTCEKRKPSRSPSPMLSKKKSVARASENEPSAKQNKSFSGNDSHKSLTDIRDKENGETEVSAKNHVPHRSSRRRRRHQRLIPIIYETLEQMDLRKPVLVNAEVQTDSNPGNTMFIDKQDIYHRLSTPTSRKRQTLEKGHIKAFSAVDEDLDEIFACEDDVHYTALPKQNPKSERILEPIIASPKDNTSDKGLLTKSAPTFEELQASITPKPVKTSPNDTALTLANAEDNKTFEHQPLSKDTEAPKSQFSSSPTKESTTRKSEVEPPSPSKEIKSSHFSVPEFKFEPKTEATTDKKLNVPKFEFKPTATADVQTNRLKENEPKPTFFAQLPSKTQETPSITENKPSFFSQLSPKREETEKKDNAPSAPASTSGFSFGGFAPKTLEEKEETKAPTFNFSLNNASSTQDTTKPTLQFNFGSSFGKPTSNIFNDKKTSENGLASSTVASESKPSAPESKPSSGFGNTAGSSPFSFNLTKESKEVPPTNSFSFAKKGKDEANDSLSAKASTPFSFAKPNTENVTTTAPQFSFNFTKPNTDAKTNLLPEKTFNEEAVKQKETEKEVPPTGPKASEIKDSVSSNNAVPSSTFNFVSPFAAVSEKTNENNIPNDTTKTNGNATKRTLEQTEDAKPFAFSFGSTTEQANKKASTSNETTKPQLDTSSKTDGVTANAPFSFASAFNAPKPSTNTADGKDSASNLTTPSPAFSFGNNSGVKASSNNNPSTNSSTAPFSFGTSNKPAFSFGSATSKTTSEGTAPAASASAPAPTTSAFSFGASNSSMNKEENTPMAKDAGDTAPASGFKSGFSFGANNSPQPASMFGTSTPAPSSAFAFGNQSGTNPAAPAGFGGITNTATNNPPSTGFTFTPSNAGSTAAPMFGAGNTPNPSGSINNASQAFAFGSGEPSNPASNPPSTGFSFGAATPSAFNASASQSPAPNGIQFNLGSSNSQTNAPPGRKIAVPRSRRKR</sequence>
<dbReference type="EMBL" id="AF280406">
    <property type="protein sequence ID" value="AAF90179.1"/>
    <property type="molecule type" value="Genomic_DNA"/>
</dbReference>
<dbReference type="EMBL" id="CU329670">
    <property type="protein sequence ID" value="CAA91890.1"/>
    <property type="molecule type" value="Genomic_DNA"/>
</dbReference>
<dbReference type="PIR" id="T38595">
    <property type="entry name" value="S62562"/>
</dbReference>
<dbReference type="RefSeq" id="NP_593213.1">
    <property type="nucleotide sequence ID" value="NM_001018609.2"/>
</dbReference>
<dbReference type="BioGRID" id="278724">
    <property type="interactions" value="70"/>
</dbReference>
<dbReference type="FunCoup" id="Q09904">
    <property type="interactions" value="31"/>
</dbReference>
<dbReference type="STRING" id="284812.Q09904"/>
<dbReference type="iPTMnet" id="Q09904"/>
<dbReference type="PaxDb" id="4896-SPAC30D11.04c.1"/>
<dbReference type="EnsemblFungi" id="SPAC30D11.04c.1">
    <property type="protein sequence ID" value="SPAC30D11.04c.1:pep"/>
    <property type="gene ID" value="SPAC30D11.04c"/>
</dbReference>
<dbReference type="GeneID" id="2542254"/>
<dbReference type="KEGG" id="spo:2542254"/>
<dbReference type="PomBase" id="SPAC30D11.04c">
    <property type="gene designation" value="nup124"/>
</dbReference>
<dbReference type="VEuPathDB" id="FungiDB:SPAC30D11.04c"/>
<dbReference type="eggNOG" id="KOG4719">
    <property type="taxonomic scope" value="Eukaryota"/>
</dbReference>
<dbReference type="HOGENOM" id="CLU_275466_0_0_1"/>
<dbReference type="InParanoid" id="Q09904"/>
<dbReference type="OMA" id="TPHYLGK"/>
<dbReference type="PhylomeDB" id="Q09904"/>
<dbReference type="Reactome" id="R-SPO-159227">
    <property type="pathway name" value="Transport of the SLBP independent Mature mRNA"/>
</dbReference>
<dbReference type="Reactome" id="R-SPO-159231">
    <property type="pathway name" value="Transport of Mature mRNA Derived from an Intronless Transcript"/>
</dbReference>
<dbReference type="Reactome" id="R-SPO-159236">
    <property type="pathway name" value="Transport of Mature mRNA derived from an Intron-Containing Transcript"/>
</dbReference>
<dbReference type="Reactome" id="R-SPO-3371453">
    <property type="pathway name" value="Regulation of HSF1-mediated heat shock response"/>
</dbReference>
<dbReference type="Reactome" id="R-SPO-4085377">
    <property type="pathway name" value="SUMOylation of SUMOylation proteins"/>
</dbReference>
<dbReference type="Reactome" id="R-SPO-4551638">
    <property type="pathway name" value="SUMOylation of chromatin organization proteins"/>
</dbReference>
<dbReference type="Reactome" id="R-SPO-4570464">
    <property type="pathway name" value="SUMOylation of RNA binding proteins"/>
</dbReference>
<dbReference type="Reactome" id="R-SPO-5578749">
    <property type="pathway name" value="Transcriptional regulation by small RNAs"/>
</dbReference>
<dbReference type="Reactome" id="R-SPO-9615933">
    <property type="pathway name" value="Postmitotic nuclear pore complex (NPC) reformation"/>
</dbReference>
<dbReference type="PRO" id="PR:Q09904"/>
<dbReference type="Proteomes" id="UP000002485">
    <property type="component" value="Chromosome I"/>
</dbReference>
<dbReference type="GO" id="GO:0140599">
    <property type="term" value="C:mitotic nuclear bridge midzone membrane domain"/>
    <property type="evidence" value="ECO:0000314"/>
    <property type="project" value="PomBase"/>
</dbReference>
<dbReference type="GO" id="GO:0005635">
    <property type="term" value="C:nuclear envelope"/>
    <property type="evidence" value="ECO:0007005"/>
    <property type="project" value="PomBase"/>
</dbReference>
<dbReference type="GO" id="GO:0005643">
    <property type="term" value="C:nuclear pore"/>
    <property type="evidence" value="ECO:0000314"/>
    <property type="project" value="PomBase"/>
</dbReference>
<dbReference type="GO" id="GO:0008139">
    <property type="term" value="F:nuclear localization sequence binding"/>
    <property type="evidence" value="ECO:0000318"/>
    <property type="project" value="GO_Central"/>
</dbReference>
<dbReference type="GO" id="GO:0017056">
    <property type="term" value="F:structural constituent of nuclear pore"/>
    <property type="evidence" value="ECO:0000318"/>
    <property type="project" value="GO_Central"/>
</dbReference>
<dbReference type="GO" id="GO:0051028">
    <property type="term" value="P:mRNA transport"/>
    <property type="evidence" value="ECO:0007669"/>
    <property type="project" value="UniProtKB-KW"/>
</dbReference>
<dbReference type="GO" id="GO:0006606">
    <property type="term" value="P:protein import into nucleus"/>
    <property type="evidence" value="ECO:0000315"/>
    <property type="project" value="PomBase"/>
</dbReference>
<dbReference type="GO" id="GO:0000054">
    <property type="term" value="P:ribosomal subunit export from nucleus"/>
    <property type="evidence" value="ECO:0000266"/>
    <property type="project" value="PomBase"/>
</dbReference>
<dbReference type="GO" id="GO:0006405">
    <property type="term" value="P:RNA export from nucleus"/>
    <property type="evidence" value="ECO:0000318"/>
    <property type="project" value="GO_Central"/>
</dbReference>
<dbReference type="InterPro" id="IPR026054">
    <property type="entry name" value="Nucleoporin"/>
</dbReference>
<dbReference type="InterPro" id="IPR018892">
    <property type="entry name" value="Retro-transposon_transp_CS"/>
</dbReference>
<dbReference type="PANTHER" id="PTHR23193">
    <property type="entry name" value="NUCLEAR PORE COMPLEX PROTEIN NUP"/>
    <property type="match status" value="1"/>
</dbReference>
<dbReference type="PANTHER" id="PTHR23193:SF23">
    <property type="entry name" value="NUCLEAR PORE COMPLEX PROTEIN NUP153"/>
    <property type="match status" value="1"/>
</dbReference>
<dbReference type="Pfam" id="PF10599">
    <property type="entry name" value="Nup_retrotrp_bd"/>
    <property type="match status" value="1"/>
</dbReference>
<proteinExistence type="evidence at protein level"/>
<name>NU124_SCHPO</name>
<accession>Q09904</accession>
<feature type="chain" id="PRO_0000204837" description="Nucleoporin nup124">
    <location>
        <begin position="1"/>
        <end position="1159"/>
    </location>
</feature>
<feature type="region of interest" description="Disordered" evidence="1">
    <location>
        <begin position="1"/>
        <end position="28"/>
    </location>
</feature>
<feature type="region of interest" description="Disordered" evidence="1">
    <location>
        <begin position="44"/>
        <end position="77"/>
    </location>
</feature>
<feature type="region of interest" description="Disordered" evidence="1">
    <location>
        <begin position="106"/>
        <end position="125"/>
    </location>
</feature>
<feature type="region of interest" description="Disordered" evidence="1">
    <location>
        <begin position="183"/>
        <end position="273"/>
    </location>
</feature>
<feature type="region of interest" description="Disordered" evidence="1">
    <location>
        <begin position="426"/>
        <end position="715"/>
    </location>
</feature>
<feature type="region of interest" description="Disordered" evidence="1">
    <location>
        <begin position="746"/>
        <end position="780"/>
    </location>
</feature>
<feature type="region of interest" description="Disordered" evidence="1">
    <location>
        <begin position="794"/>
        <end position="1159"/>
    </location>
</feature>
<feature type="compositionally biased region" description="Polar residues" evidence="1">
    <location>
        <begin position="1"/>
        <end position="13"/>
    </location>
</feature>
<feature type="compositionally biased region" description="Basic and acidic residues" evidence="1">
    <location>
        <begin position="48"/>
        <end position="62"/>
    </location>
</feature>
<feature type="compositionally biased region" description="Basic and acidic residues" evidence="1">
    <location>
        <begin position="106"/>
        <end position="119"/>
    </location>
</feature>
<feature type="compositionally biased region" description="Polar residues" evidence="1">
    <location>
        <begin position="226"/>
        <end position="239"/>
    </location>
</feature>
<feature type="compositionally biased region" description="Basic and acidic residues" evidence="1">
    <location>
        <begin position="240"/>
        <end position="260"/>
    </location>
</feature>
<feature type="compositionally biased region" description="Basic residues" evidence="1">
    <location>
        <begin position="263"/>
        <end position="273"/>
    </location>
</feature>
<feature type="compositionally biased region" description="Basic and acidic residues" evidence="1">
    <location>
        <begin position="426"/>
        <end position="441"/>
    </location>
</feature>
<feature type="compositionally biased region" description="Polar residues" evidence="1">
    <location>
        <begin position="442"/>
        <end position="453"/>
    </location>
</feature>
<feature type="compositionally biased region" description="Basic and acidic residues" evidence="1">
    <location>
        <begin position="480"/>
        <end position="494"/>
    </location>
</feature>
<feature type="compositionally biased region" description="Polar residues" evidence="1">
    <location>
        <begin position="528"/>
        <end position="549"/>
    </location>
</feature>
<feature type="compositionally biased region" description="Basic and acidic residues" evidence="1">
    <location>
        <begin position="550"/>
        <end position="560"/>
    </location>
</feature>
<feature type="compositionally biased region" description="Polar residues" evidence="1">
    <location>
        <begin position="590"/>
        <end position="626"/>
    </location>
</feature>
<feature type="compositionally biased region" description="Low complexity" evidence="1">
    <location>
        <begin position="642"/>
        <end position="656"/>
    </location>
</feature>
<feature type="compositionally biased region" description="Polar residues" evidence="1">
    <location>
        <begin position="657"/>
        <end position="672"/>
    </location>
</feature>
<feature type="compositionally biased region" description="Polar residues" evidence="1">
    <location>
        <begin position="696"/>
        <end position="715"/>
    </location>
</feature>
<feature type="compositionally biased region" description="Basic and acidic residues" evidence="1">
    <location>
        <begin position="746"/>
        <end position="758"/>
    </location>
</feature>
<feature type="compositionally biased region" description="Polar residues" evidence="1">
    <location>
        <begin position="771"/>
        <end position="780"/>
    </location>
</feature>
<feature type="compositionally biased region" description="Polar residues" evidence="1">
    <location>
        <begin position="798"/>
        <end position="814"/>
    </location>
</feature>
<feature type="compositionally biased region" description="Basic and acidic residues" evidence="1">
    <location>
        <begin position="815"/>
        <end position="824"/>
    </location>
</feature>
<feature type="compositionally biased region" description="Polar residues" evidence="1">
    <location>
        <begin position="830"/>
        <end position="861"/>
    </location>
</feature>
<feature type="compositionally biased region" description="Low complexity" evidence="1">
    <location>
        <begin position="863"/>
        <end position="879"/>
    </location>
</feature>
<feature type="compositionally biased region" description="Polar residues" evidence="1">
    <location>
        <begin position="880"/>
        <end position="908"/>
    </location>
</feature>
<feature type="compositionally biased region" description="Low complexity" evidence="1">
    <location>
        <begin position="909"/>
        <end position="926"/>
    </location>
</feature>
<feature type="compositionally biased region" description="Polar residues" evidence="1">
    <location>
        <begin position="927"/>
        <end position="947"/>
    </location>
</feature>
<feature type="compositionally biased region" description="Low complexity" evidence="1">
    <location>
        <begin position="948"/>
        <end position="963"/>
    </location>
</feature>
<feature type="compositionally biased region" description="Polar residues" evidence="1">
    <location>
        <begin position="1001"/>
        <end position="1019"/>
    </location>
</feature>
<feature type="compositionally biased region" description="Polar residues" evidence="1">
    <location>
        <begin position="1042"/>
        <end position="1064"/>
    </location>
</feature>
<feature type="compositionally biased region" description="Polar residues" evidence="1">
    <location>
        <begin position="1074"/>
        <end position="1087"/>
    </location>
</feature>
<feature type="compositionally biased region" description="Polar residues" evidence="1">
    <location>
        <begin position="1095"/>
        <end position="1108"/>
    </location>
</feature>
<feature type="compositionally biased region" description="Polar residues" evidence="1">
    <location>
        <begin position="1116"/>
        <end position="1144"/>
    </location>
</feature>
<feature type="modified residue" description="Phosphoserine" evidence="3">
    <location>
        <position position="211"/>
    </location>
</feature>
<feature type="modified residue" description="Phosphoserine" evidence="3">
    <location>
        <position position="380"/>
    </location>
</feature>
<feature type="modified residue" description="Phosphoserine" evidence="3">
    <location>
        <position position="465"/>
    </location>
</feature>
<feature type="modified residue" description="Phosphoserine" evidence="3">
    <location>
        <position position="546"/>
    </location>
</feature>
<reference key="1">
    <citation type="journal article" date="1999" name="Mol. Cell. Biol.">
        <title>Nup124p is a nuclear pore factor of Schizosaccharomyces pombe that is important for nuclear import and activity of retrotransposon Tf1.</title>
        <authorList>
            <person name="Balasundaram D."/>
            <person name="Benedik M.J."/>
            <person name="Morphew M."/>
            <person name="Dang V.-D."/>
            <person name="Levin H.L."/>
        </authorList>
    </citation>
    <scope>NUCLEOTIDE SEQUENCE [GENOMIC DNA]</scope>
    <scope>FUNCTION</scope>
    <scope>SUBCELLULAR LOCATION</scope>
</reference>
<reference key="2">
    <citation type="journal article" date="2002" name="Nature">
        <title>The genome sequence of Schizosaccharomyces pombe.</title>
        <authorList>
            <person name="Wood V."/>
            <person name="Gwilliam R."/>
            <person name="Rajandream M.A."/>
            <person name="Lyne M.H."/>
            <person name="Lyne R."/>
            <person name="Stewart A."/>
            <person name="Sgouros J.G."/>
            <person name="Peat N."/>
            <person name="Hayles J."/>
            <person name="Baker S.G."/>
            <person name="Basham D."/>
            <person name="Bowman S."/>
            <person name="Brooks K."/>
            <person name="Brown D."/>
            <person name="Brown S."/>
            <person name="Chillingworth T."/>
            <person name="Churcher C.M."/>
            <person name="Collins M."/>
            <person name="Connor R."/>
            <person name="Cronin A."/>
            <person name="Davis P."/>
            <person name="Feltwell T."/>
            <person name="Fraser A."/>
            <person name="Gentles S."/>
            <person name="Goble A."/>
            <person name="Hamlin N."/>
            <person name="Harris D.E."/>
            <person name="Hidalgo J."/>
            <person name="Hodgson G."/>
            <person name="Holroyd S."/>
            <person name="Hornsby T."/>
            <person name="Howarth S."/>
            <person name="Huckle E.J."/>
            <person name="Hunt S."/>
            <person name="Jagels K."/>
            <person name="James K.D."/>
            <person name="Jones L."/>
            <person name="Jones M."/>
            <person name="Leather S."/>
            <person name="McDonald S."/>
            <person name="McLean J."/>
            <person name="Mooney P."/>
            <person name="Moule S."/>
            <person name="Mungall K.L."/>
            <person name="Murphy L.D."/>
            <person name="Niblett D."/>
            <person name="Odell C."/>
            <person name="Oliver K."/>
            <person name="O'Neil S."/>
            <person name="Pearson D."/>
            <person name="Quail M.A."/>
            <person name="Rabbinowitsch E."/>
            <person name="Rutherford K.M."/>
            <person name="Rutter S."/>
            <person name="Saunders D."/>
            <person name="Seeger K."/>
            <person name="Sharp S."/>
            <person name="Skelton J."/>
            <person name="Simmonds M.N."/>
            <person name="Squares R."/>
            <person name="Squares S."/>
            <person name="Stevens K."/>
            <person name="Taylor K."/>
            <person name="Taylor R.G."/>
            <person name="Tivey A."/>
            <person name="Walsh S.V."/>
            <person name="Warren T."/>
            <person name="Whitehead S."/>
            <person name="Woodward J.R."/>
            <person name="Volckaert G."/>
            <person name="Aert R."/>
            <person name="Robben J."/>
            <person name="Grymonprez B."/>
            <person name="Weltjens I."/>
            <person name="Vanstreels E."/>
            <person name="Rieger M."/>
            <person name="Schaefer M."/>
            <person name="Mueller-Auer S."/>
            <person name="Gabel C."/>
            <person name="Fuchs M."/>
            <person name="Duesterhoeft A."/>
            <person name="Fritzc C."/>
            <person name="Holzer E."/>
            <person name="Moestl D."/>
            <person name="Hilbert H."/>
            <person name="Borzym K."/>
            <person name="Langer I."/>
            <person name="Beck A."/>
            <person name="Lehrach H."/>
            <person name="Reinhardt R."/>
            <person name="Pohl T.M."/>
            <person name="Eger P."/>
            <person name="Zimmermann W."/>
            <person name="Wedler H."/>
            <person name="Wambutt R."/>
            <person name="Purnelle B."/>
            <person name="Goffeau A."/>
            <person name="Cadieu E."/>
            <person name="Dreano S."/>
            <person name="Gloux S."/>
            <person name="Lelaure V."/>
            <person name="Mottier S."/>
            <person name="Galibert F."/>
            <person name="Aves S.J."/>
            <person name="Xiang Z."/>
            <person name="Hunt C."/>
            <person name="Moore K."/>
            <person name="Hurst S.M."/>
            <person name="Lucas M."/>
            <person name="Rochet M."/>
            <person name="Gaillardin C."/>
            <person name="Tallada V.A."/>
            <person name="Garzon A."/>
            <person name="Thode G."/>
            <person name="Daga R.R."/>
            <person name="Cruzado L."/>
            <person name="Jimenez J."/>
            <person name="Sanchez M."/>
            <person name="del Rey F."/>
            <person name="Benito J."/>
            <person name="Dominguez A."/>
            <person name="Revuelta J.L."/>
            <person name="Moreno S."/>
            <person name="Armstrong J."/>
            <person name="Forsburg S.L."/>
            <person name="Cerutti L."/>
            <person name="Lowe T."/>
            <person name="McCombie W.R."/>
            <person name="Paulsen I."/>
            <person name="Potashkin J."/>
            <person name="Shpakovski G.V."/>
            <person name="Ussery D."/>
            <person name="Barrell B.G."/>
            <person name="Nurse P."/>
        </authorList>
    </citation>
    <scope>NUCLEOTIDE SEQUENCE [LARGE SCALE GENOMIC DNA]</scope>
    <source>
        <strain>972 / ATCC 24843</strain>
    </source>
</reference>
<reference key="3">
    <citation type="journal article" date="2008" name="J. Proteome Res.">
        <title>Phosphoproteome analysis of fission yeast.</title>
        <authorList>
            <person name="Wilson-Grady J.T."/>
            <person name="Villen J."/>
            <person name="Gygi S.P."/>
        </authorList>
    </citation>
    <scope>PHOSPHORYLATION [LARGE SCALE ANALYSIS] AT SER-211; SER-380; SER-465 AND SER-546</scope>
    <scope>IDENTIFICATION BY MASS SPECTROMETRY</scope>
</reference>